<evidence type="ECO:0000255" key="1"/>
<evidence type="ECO:0000255" key="2">
    <source>
        <dbReference type="HAMAP-Rule" id="MF_00684"/>
    </source>
</evidence>
<name>AC4CH_SALAR</name>
<accession>A9MRH4</accession>
<reference key="1">
    <citation type="submission" date="2007-11" db="EMBL/GenBank/DDBJ databases">
        <authorList>
            <consortium name="The Salmonella enterica serovar Arizonae Genome Sequencing Project"/>
            <person name="McClelland M."/>
            <person name="Sanderson E.K."/>
            <person name="Porwollik S."/>
            <person name="Spieth J."/>
            <person name="Clifton W.S."/>
            <person name="Fulton R."/>
            <person name="Chunyan W."/>
            <person name="Wollam A."/>
            <person name="Shah N."/>
            <person name="Pepin K."/>
            <person name="Bhonagiri V."/>
            <person name="Nash W."/>
            <person name="Johnson M."/>
            <person name="Thiruvilangam P."/>
            <person name="Wilson R."/>
        </authorList>
    </citation>
    <scope>NUCLEOTIDE SEQUENCE [LARGE SCALE GENOMIC DNA]</scope>
    <source>
        <strain>ATCC BAA-731 / CDC346-86 / RSK2980</strain>
    </source>
</reference>
<feature type="chain" id="PRO_1000083062" description="N(4)-acetylcytidine amidohydrolase">
    <location>
        <begin position="1"/>
        <end position="103"/>
    </location>
</feature>
<feature type="domain" description="ASCH" evidence="1">
    <location>
        <begin position="6"/>
        <end position="100"/>
    </location>
</feature>
<feature type="active site" description="Proton acceptor" evidence="2">
    <location>
        <position position="21"/>
    </location>
</feature>
<feature type="active site" description="Nucleophile" evidence="2">
    <location>
        <position position="24"/>
    </location>
</feature>
<feature type="active site" description="Proton donor" evidence="2">
    <location>
        <position position="74"/>
    </location>
</feature>
<comment type="function">
    <text evidence="2">Catalyzes the hydrolysis of N(4)-acetylcytidine (ac4C).</text>
</comment>
<comment type="catalytic activity">
    <reaction evidence="2">
        <text>N(4)-acetylcytidine + H2O = cytidine + acetate + H(+)</text>
        <dbReference type="Rhea" id="RHEA:62932"/>
        <dbReference type="ChEBI" id="CHEBI:15377"/>
        <dbReference type="ChEBI" id="CHEBI:15378"/>
        <dbReference type="ChEBI" id="CHEBI:17562"/>
        <dbReference type="ChEBI" id="CHEBI:30089"/>
        <dbReference type="ChEBI" id="CHEBI:70989"/>
        <dbReference type="EC" id="3.5.1.135"/>
    </reaction>
</comment>
<comment type="catalytic activity">
    <reaction evidence="2">
        <text>N(4)-acetyl-2'-deoxycytidine + H2O = 2'-deoxycytidine + acetate + H(+)</text>
        <dbReference type="Rhea" id="RHEA:62936"/>
        <dbReference type="ChEBI" id="CHEBI:15377"/>
        <dbReference type="ChEBI" id="CHEBI:15378"/>
        <dbReference type="ChEBI" id="CHEBI:15698"/>
        <dbReference type="ChEBI" id="CHEBI:30089"/>
        <dbReference type="ChEBI" id="CHEBI:146133"/>
        <dbReference type="EC" id="3.5.1.135"/>
    </reaction>
</comment>
<comment type="catalytic activity">
    <reaction evidence="2">
        <text>N(4)-acetylcytosine + H2O = cytosine + acetate + H(+)</text>
        <dbReference type="Rhea" id="RHEA:62940"/>
        <dbReference type="ChEBI" id="CHEBI:15377"/>
        <dbReference type="ChEBI" id="CHEBI:15378"/>
        <dbReference type="ChEBI" id="CHEBI:16040"/>
        <dbReference type="ChEBI" id="CHEBI:30089"/>
        <dbReference type="ChEBI" id="CHEBI:146134"/>
        <dbReference type="EC" id="3.5.1.135"/>
    </reaction>
</comment>
<comment type="similarity">
    <text evidence="2">Belongs to the N(4)-acetylcytidine amidohydrolase family.</text>
</comment>
<sequence>MQPNDITFFQRFQNDILTGRKTITIRDASESHFKAGDVLRVGRFEDDGYFCTIEVTGTSTVTLDTLNEKHAQQENMSLDELKRVIAEIYPNQMQFYVIDFKCL</sequence>
<gene>
    <name type="primary">yqfB</name>
    <name type="ordered locus">SARI_04600</name>
</gene>
<keyword id="KW-0378">Hydrolase</keyword>
<keyword id="KW-1185">Reference proteome</keyword>
<protein>
    <recommendedName>
        <fullName evidence="2">N(4)-acetylcytidine amidohydrolase</fullName>
        <shortName evidence="2">ac4C amidohydrolase</shortName>
        <ecNumber evidence="2">3.5.1.135</ecNumber>
    </recommendedName>
</protein>
<dbReference type="EC" id="3.5.1.135" evidence="2"/>
<dbReference type="EMBL" id="CP000880">
    <property type="protein sequence ID" value="ABX24372.1"/>
    <property type="molecule type" value="Genomic_DNA"/>
</dbReference>
<dbReference type="SMR" id="A9MRH4"/>
<dbReference type="STRING" id="41514.SARI_04600"/>
<dbReference type="KEGG" id="ses:SARI_04600"/>
<dbReference type="HOGENOM" id="CLU_152586_0_0_6"/>
<dbReference type="Proteomes" id="UP000002084">
    <property type="component" value="Chromosome"/>
</dbReference>
<dbReference type="GO" id="GO:0005829">
    <property type="term" value="C:cytosol"/>
    <property type="evidence" value="ECO:0007669"/>
    <property type="project" value="TreeGrafter"/>
</dbReference>
<dbReference type="GO" id="GO:0016813">
    <property type="term" value="F:hydrolase activity, acting on carbon-nitrogen (but not peptide) bonds, in linear amidines"/>
    <property type="evidence" value="ECO:0007669"/>
    <property type="project" value="UniProtKB-UniRule"/>
</dbReference>
<dbReference type="GO" id="GO:0106251">
    <property type="term" value="F:N4-acetylcytidine amidohydrolase activity"/>
    <property type="evidence" value="ECO:0007669"/>
    <property type="project" value="RHEA"/>
</dbReference>
<dbReference type="CDD" id="cd06552">
    <property type="entry name" value="ASCH_yqfb_like"/>
    <property type="match status" value="1"/>
</dbReference>
<dbReference type="FunFam" id="2.30.130.30:FF:000001">
    <property type="entry name" value="UPF0267 protein YqfB"/>
    <property type="match status" value="1"/>
</dbReference>
<dbReference type="Gene3D" id="2.30.130.30">
    <property type="entry name" value="Hypothetical protein"/>
    <property type="match status" value="1"/>
</dbReference>
<dbReference type="HAMAP" id="MF_00684">
    <property type="entry name" value="ac4C_amidohydr"/>
    <property type="match status" value="1"/>
</dbReference>
<dbReference type="InterPro" id="IPR008314">
    <property type="entry name" value="AC4CH"/>
</dbReference>
<dbReference type="InterPro" id="IPR007374">
    <property type="entry name" value="ASCH_domain"/>
</dbReference>
<dbReference type="InterPro" id="IPR015947">
    <property type="entry name" value="PUA-like_sf"/>
</dbReference>
<dbReference type="NCBIfam" id="NF003443">
    <property type="entry name" value="PRK04980.1"/>
    <property type="match status" value="1"/>
</dbReference>
<dbReference type="PANTHER" id="PTHR38088">
    <property type="entry name" value="UCP029143 FAMILY PROTEIN"/>
    <property type="match status" value="1"/>
</dbReference>
<dbReference type="PANTHER" id="PTHR38088:SF2">
    <property type="entry name" value="UCP029143 FAMILY PROTEIN"/>
    <property type="match status" value="1"/>
</dbReference>
<dbReference type="Pfam" id="PF04266">
    <property type="entry name" value="ASCH"/>
    <property type="match status" value="1"/>
</dbReference>
<dbReference type="PIRSF" id="PIRSF029143">
    <property type="entry name" value="UCP029143"/>
    <property type="match status" value="1"/>
</dbReference>
<dbReference type="SMART" id="SM01022">
    <property type="entry name" value="ASCH"/>
    <property type="match status" value="1"/>
</dbReference>
<dbReference type="SUPFAM" id="SSF88697">
    <property type="entry name" value="PUA domain-like"/>
    <property type="match status" value="1"/>
</dbReference>
<proteinExistence type="inferred from homology"/>
<organism>
    <name type="scientific">Salmonella arizonae (strain ATCC BAA-731 / CDC346-86 / RSK2980)</name>
    <dbReference type="NCBI Taxonomy" id="41514"/>
    <lineage>
        <taxon>Bacteria</taxon>
        <taxon>Pseudomonadati</taxon>
        <taxon>Pseudomonadota</taxon>
        <taxon>Gammaproteobacteria</taxon>
        <taxon>Enterobacterales</taxon>
        <taxon>Enterobacteriaceae</taxon>
        <taxon>Salmonella</taxon>
    </lineage>
</organism>